<proteinExistence type="inferred from homology"/>
<evidence type="ECO:0000255" key="1">
    <source>
        <dbReference type="HAMAP-Rule" id="MF_00313"/>
    </source>
</evidence>
<evidence type="ECO:0000305" key="2"/>
<reference key="1">
    <citation type="submission" date="2007-03" db="EMBL/GenBank/DDBJ databases">
        <authorList>
            <person name="Heidelberg J."/>
        </authorList>
    </citation>
    <scope>NUCLEOTIDE SEQUENCE [LARGE SCALE GENOMIC DNA]</scope>
    <source>
        <strain>ATCC 39541 / Classical Ogawa 395 / O395</strain>
    </source>
</reference>
<reference key="2">
    <citation type="journal article" date="2008" name="PLoS ONE">
        <title>A recalibrated molecular clock and independent origins for the cholera pandemic clones.</title>
        <authorList>
            <person name="Feng L."/>
            <person name="Reeves P.R."/>
            <person name="Lan R."/>
            <person name="Ren Y."/>
            <person name="Gao C."/>
            <person name="Zhou Z."/>
            <person name="Ren Y."/>
            <person name="Cheng J."/>
            <person name="Wang W."/>
            <person name="Wang J."/>
            <person name="Qian W."/>
            <person name="Li D."/>
            <person name="Wang L."/>
        </authorList>
    </citation>
    <scope>NUCLEOTIDE SEQUENCE [LARGE SCALE GENOMIC DNA]</scope>
    <source>
        <strain>ATCC 39541 / Classical Ogawa 395 / O395</strain>
    </source>
</reference>
<protein>
    <recommendedName>
        <fullName evidence="1">Glutaminase</fullName>
        <ecNumber evidence="1">3.5.1.2</ecNumber>
    </recommendedName>
</protein>
<comment type="catalytic activity">
    <reaction evidence="1">
        <text>L-glutamine + H2O = L-glutamate + NH4(+)</text>
        <dbReference type="Rhea" id="RHEA:15889"/>
        <dbReference type="ChEBI" id="CHEBI:15377"/>
        <dbReference type="ChEBI" id="CHEBI:28938"/>
        <dbReference type="ChEBI" id="CHEBI:29985"/>
        <dbReference type="ChEBI" id="CHEBI:58359"/>
        <dbReference type="EC" id="3.5.1.2"/>
    </reaction>
</comment>
<comment type="subunit">
    <text evidence="1">Homotetramer.</text>
</comment>
<comment type="similarity">
    <text evidence="1">Belongs to the glutaminase family.</text>
</comment>
<comment type="sequence caution" evidence="2">
    <conflict type="erroneous initiation">
        <sequence resource="EMBL-CDS" id="ABQ21307"/>
    </conflict>
</comment>
<comment type="sequence caution" evidence="2">
    <conflict type="erroneous initiation">
        <sequence resource="EMBL-CDS" id="ACP08517"/>
    </conflict>
</comment>
<accession>A5F9H5</accession>
<accession>C3M4P5</accession>
<gene>
    <name evidence="1" type="primary">glsA</name>
    <name type="ordered locus">VC0395_A0006</name>
    <name type="ordered locus">VC395_0498</name>
</gene>
<dbReference type="EC" id="3.5.1.2" evidence="1"/>
<dbReference type="EMBL" id="CP000627">
    <property type="protein sequence ID" value="ABQ21307.1"/>
    <property type="status" value="ALT_INIT"/>
    <property type="molecule type" value="Genomic_DNA"/>
</dbReference>
<dbReference type="EMBL" id="CP001235">
    <property type="protein sequence ID" value="ACP08517.1"/>
    <property type="status" value="ALT_INIT"/>
    <property type="molecule type" value="Genomic_DNA"/>
</dbReference>
<dbReference type="SMR" id="A5F9H5"/>
<dbReference type="KEGG" id="vco:VC0395_A0006"/>
<dbReference type="KEGG" id="vcr:VC395_0498"/>
<dbReference type="PATRIC" id="fig|345073.21.peg.485"/>
<dbReference type="eggNOG" id="COG2066">
    <property type="taxonomic scope" value="Bacteria"/>
</dbReference>
<dbReference type="HOGENOM" id="CLU_027932_1_1_6"/>
<dbReference type="OrthoDB" id="9788822at2"/>
<dbReference type="Proteomes" id="UP000000249">
    <property type="component" value="Chromosome 2"/>
</dbReference>
<dbReference type="GO" id="GO:0004359">
    <property type="term" value="F:glutaminase activity"/>
    <property type="evidence" value="ECO:0007669"/>
    <property type="project" value="UniProtKB-UniRule"/>
</dbReference>
<dbReference type="GO" id="GO:0006537">
    <property type="term" value="P:glutamate biosynthetic process"/>
    <property type="evidence" value="ECO:0007669"/>
    <property type="project" value="TreeGrafter"/>
</dbReference>
<dbReference type="GO" id="GO:0006543">
    <property type="term" value="P:glutamine catabolic process"/>
    <property type="evidence" value="ECO:0007669"/>
    <property type="project" value="TreeGrafter"/>
</dbReference>
<dbReference type="FunFam" id="3.40.710.10:FF:000005">
    <property type="entry name" value="Glutaminase"/>
    <property type="match status" value="1"/>
</dbReference>
<dbReference type="Gene3D" id="3.40.710.10">
    <property type="entry name" value="DD-peptidase/beta-lactamase superfamily"/>
    <property type="match status" value="1"/>
</dbReference>
<dbReference type="HAMAP" id="MF_00313">
    <property type="entry name" value="Glutaminase"/>
    <property type="match status" value="1"/>
</dbReference>
<dbReference type="InterPro" id="IPR012338">
    <property type="entry name" value="Beta-lactam/transpept-like"/>
</dbReference>
<dbReference type="InterPro" id="IPR015868">
    <property type="entry name" value="Glutaminase"/>
</dbReference>
<dbReference type="NCBIfam" id="TIGR03814">
    <property type="entry name" value="Gln_ase"/>
    <property type="match status" value="1"/>
</dbReference>
<dbReference type="NCBIfam" id="NF002132">
    <property type="entry name" value="PRK00971.1-1"/>
    <property type="match status" value="1"/>
</dbReference>
<dbReference type="NCBIfam" id="NF002133">
    <property type="entry name" value="PRK00971.1-2"/>
    <property type="match status" value="1"/>
</dbReference>
<dbReference type="PANTHER" id="PTHR12544">
    <property type="entry name" value="GLUTAMINASE"/>
    <property type="match status" value="1"/>
</dbReference>
<dbReference type="PANTHER" id="PTHR12544:SF29">
    <property type="entry name" value="GLUTAMINASE"/>
    <property type="match status" value="1"/>
</dbReference>
<dbReference type="Pfam" id="PF04960">
    <property type="entry name" value="Glutaminase"/>
    <property type="match status" value="1"/>
</dbReference>
<dbReference type="SUPFAM" id="SSF56601">
    <property type="entry name" value="beta-lactamase/transpeptidase-like"/>
    <property type="match status" value="1"/>
</dbReference>
<name>GLSA_VIBC3</name>
<sequence>MKPTAEILASIIEEVRPLTGQGKVADYIPALAKVPSEKLGIAVFTNQGEVISAGDAQEGFSIQSISKVLSLTLAMGLYQPNELWSRVGKEPSGQAFNSLIQLEMEHGIPRNPFINAGAIVVCDMLQSRLSAPRQRLLEFVRQLSGEPLIAYDKVVAASEMMHSDRNAAIAYLMRSFGNFHNEVIPVLHNYFHACALKMSCVELAKTFSYLANKGVSVVTGETVITPTQSKQTNALLATCGLYDGAGEFAYRVGMPGKSGVGGGIIAVVPGEMTIAVWSPALDQSGNSLAGTRALELLAQRIGRSIF</sequence>
<keyword id="KW-0378">Hydrolase</keyword>
<organism>
    <name type="scientific">Vibrio cholerae serotype O1 (strain ATCC 39541 / Classical Ogawa 395 / O395)</name>
    <dbReference type="NCBI Taxonomy" id="345073"/>
    <lineage>
        <taxon>Bacteria</taxon>
        <taxon>Pseudomonadati</taxon>
        <taxon>Pseudomonadota</taxon>
        <taxon>Gammaproteobacteria</taxon>
        <taxon>Vibrionales</taxon>
        <taxon>Vibrionaceae</taxon>
        <taxon>Vibrio</taxon>
    </lineage>
</organism>
<feature type="chain" id="PRO_0000336042" description="Glutaminase">
    <location>
        <begin position="1"/>
        <end position="306"/>
    </location>
</feature>
<feature type="binding site" evidence="1">
    <location>
        <position position="64"/>
    </location>
    <ligand>
        <name>substrate</name>
    </ligand>
</feature>
<feature type="binding site" evidence="1">
    <location>
        <position position="115"/>
    </location>
    <ligand>
        <name>substrate</name>
    </ligand>
</feature>
<feature type="binding site" evidence="1">
    <location>
        <position position="159"/>
    </location>
    <ligand>
        <name>substrate</name>
    </ligand>
</feature>
<feature type="binding site" evidence="1">
    <location>
        <position position="166"/>
    </location>
    <ligand>
        <name>substrate</name>
    </ligand>
</feature>
<feature type="binding site" evidence="1">
    <location>
        <position position="190"/>
    </location>
    <ligand>
        <name>substrate</name>
    </ligand>
</feature>
<feature type="binding site" evidence="1">
    <location>
        <position position="242"/>
    </location>
    <ligand>
        <name>substrate</name>
    </ligand>
</feature>
<feature type="binding site" evidence="1">
    <location>
        <position position="260"/>
    </location>
    <ligand>
        <name>substrate</name>
    </ligand>
</feature>